<gene>
    <name evidence="1" type="primary">eif1a</name>
    <name type="ordered locus">rrnAC2474</name>
</gene>
<evidence type="ECO:0000255" key="1">
    <source>
        <dbReference type="HAMAP-Rule" id="MF_00216"/>
    </source>
</evidence>
<evidence type="ECO:0000305" key="2"/>
<dbReference type="EMBL" id="AY596297">
    <property type="protein sequence ID" value="AAV47281.1"/>
    <property type="status" value="ALT_INIT"/>
    <property type="molecule type" value="Genomic_DNA"/>
</dbReference>
<dbReference type="RefSeq" id="WP_004516096.1">
    <property type="nucleotide sequence ID" value="NZ_CP039138.1"/>
</dbReference>
<dbReference type="SMR" id="Q5UZM2"/>
<dbReference type="STRING" id="272569.rrnAC2474"/>
<dbReference type="PaxDb" id="272569-rrnAC2474"/>
<dbReference type="EnsemblBacteria" id="AAV47281">
    <property type="protein sequence ID" value="AAV47281"/>
    <property type="gene ID" value="rrnAC2474"/>
</dbReference>
<dbReference type="GeneID" id="64824277"/>
<dbReference type="KEGG" id="hma:rrnAC2474"/>
<dbReference type="PATRIC" id="fig|272569.17.peg.3086"/>
<dbReference type="eggNOG" id="arCOG01179">
    <property type="taxonomic scope" value="Archaea"/>
</dbReference>
<dbReference type="HOGENOM" id="CLU_109098_1_2_2"/>
<dbReference type="Proteomes" id="UP000001169">
    <property type="component" value="Chromosome I"/>
</dbReference>
<dbReference type="GO" id="GO:0003723">
    <property type="term" value="F:RNA binding"/>
    <property type="evidence" value="ECO:0007669"/>
    <property type="project" value="InterPro"/>
</dbReference>
<dbReference type="GO" id="GO:0003743">
    <property type="term" value="F:translation initiation factor activity"/>
    <property type="evidence" value="ECO:0007669"/>
    <property type="project" value="UniProtKB-UniRule"/>
</dbReference>
<dbReference type="CDD" id="cd05793">
    <property type="entry name" value="S1_IF1A"/>
    <property type="match status" value="1"/>
</dbReference>
<dbReference type="Gene3D" id="2.40.50.140">
    <property type="entry name" value="Nucleic acid-binding proteins"/>
    <property type="match status" value="1"/>
</dbReference>
<dbReference type="HAMAP" id="MF_00216">
    <property type="entry name" value="aIF_1A"/>
    <property type="match status" value="1"/>
</dbReference>
<dbReference type="InterPro" id="IPR012340">
    <property type="entry name" value="NA-bd_OB-fold"/>
</dbReference>
<dbReference type="InterPro" id="IPR006196">
    <property type="entry name" value="RNA-binding_domain_S1_IF1"/>
</dbReference>
<dbReference type="InterPro" id="IPR001253">
    <property type="entry name" value="TIF_eIF-1A"/>
</dbReference>
<dbReference type="InterPro" id="IPR018104">
    <property type="entry name" value="TIF_eIF-1A_CS"/>
</dbReference>
<dbReference type="NCBIfam" id="TIGR00523">
    <property type="entry name" value="eIF-1A"/>
    <property type="match status" value="1"/>
</dbReference>
<dbReference type="NCBIfam" id="NF003082">
    <property type="entry name" value="PRK04012.1-1"/>
    <property type="match status" value="1"/>
</dbReference>
<dbReference type="NCBIfam" id="NF003083">
    <property type="entry name" value="PRK04012.1-2"/>
    <property type="match status" value="1"/>
</dbReference>
<dbReference type="NCBIfam" id="NF003084">
    <property type="entry name" value="PRK04012.1-3"/>
    <property type="match status" value="1"/>
</dbReference>
<dbReference type="NCBIfam" id="NF003085">
    <property type="entry name" value="PRK04012.1-5"/>
    <property type="match status" value="1"/>
</dbReference>
<dbReference type="PANTHER" id="PTHR21668">
    <property type="entry name" value="EIF-1A"/>
    <property type="match status" value="1"/>
</dbReference>
<dbReference type="Pfam" id="PF01176">
    <property type="entry name" value="eIF-1a"/>
    <property type="match status" value="1"/>
</dbReference>
<dbReference type="SMART" id="SM00652">
    <property type="entry name" value="eIF1a"/>
    <property type="match status" value="1"/>
</dbReference>
<dbReference type="SUPFAM" id="SSF50249">
    <property type="entry name" value="Nucleic acid-binding proteins"/>
    <property type="match status" value="1"/>
</dbReference>
<dbReference type="PROSITE" id="PS01262">
    <property type="entry name" value="IF1A"/>
    <property type="match status" value="1"/>
</dbReference>
<dbReference type="PROSITE" id="PS50832">
    <property type="entry name" value="S1_IF1_TYPE"/>
    <property type="match status" value="1"/>
</dbReference>
<comment type="function">
    <text evidence="1">Seems to be required for maximal rate of protein biosynthesis. Enhances ribosome dissociation into subunits and stabilizes the binding of the initiator Met-tRNA(I) to 40 S ribosomal subunits.</text>
</comment>
<comment type="similarity">
    <text evidence="1">Belongs to the eIF-1A family.</text>
</comment>
<comment type="sequence caution" evidence="2">
    <conflict type="erroneous initiation">
        <sequence resource="EMBL-CDS" id="AAV47281"/>
    </conflict>
</comment>
<feature type="chain" id="PRO_0000259363" description="Translation initiation factor 1A">
    <location>
        <begin position="1"/>
        <end position="95"/>
    </location>
</feature>
<feature type="domain" description="S1-like" evidence="1">
    <location>
        <begin position="6"/>
        <end position="80"/>
    </location>
</feature>
<protein>
    <recommendedName>
        <fullName evidence="1">Translation initiation factor 1A</fullName>
        <shortName evidence="1">aIF-1A</shortName>
    </recommendedName>
</protein>
<organism>
    <name type="scientific">Haloarcula marismortui (strain ATCC 43049 / DSM 3752 / JCM 8966 / VKM B-1809)</name>
    <name type="common">Halobacterium marismortui</name>
    <dbReference type="NCBI Taxonomy" id="272569"/>
    <lineage>
        <taxon>Archaea</taxon>
        <taxon>Methanobacteriati</taxon>
        <taxon>Methanobacteriota</taxon>
        <taxon>Stenosarchaea group</taxon>
        <taxon>Halobacteria</taxon>
        <taxon>Halobacteriales</taxon>
        <taxon>Haloarculaceae</taxon>
        <taxon>Haloarcula</taxon>
    </lineage>
</organism>
<proteinExistence type="inferred from homology"/>
<keyword id="KW-0396">Initiation factor</keyword>
<keyword id="KW-0648">Protein biosynthesis</keyword>
<keyword id="KW-1185">Reference proteome</keyword>
<sequence length="95" mass="11378">MSDNDSRKNLRMPEEDEVFAVVMDMLGANRVKVRCMDGVERTARIPGKMQKRIWIREDDVVLVEPWDWQDEKADITWRYEKQDADQLREEGHIQE</sequence>
<accession>Q5UZM2</accession>
<name>IF1A_HALMA</name>
<reference key="1">
    <citation type="journal article" date="2004" name="Genome Res.">
        <title>Genome sequence of Haloarcula marismortui: a halophilic archaeon from the Dead Sea.</title>
        <authorList>
            <person name="Baliga N.S."/>
            <person name="Bonneau R."/>
            <person name="Facciotti M.T."/>
            <person name="Pan M."/>
            <person name="Glusman G."/>
            <person name="Deutsch E.W."/>
            <person name="Shannon P."/>
            <person name="Chiu Y."/>
            <person name="Weng R.S."/>
            <person name="Gan R.R."/>
            <person name="Hung P."/>
            <person name="Date S.V."/>
            <person name="Marcotte E."/>
            <person name="Hood L."/>
            <person name="Ng W.V."/>
        </authorList>
    </citation>
    <scope>NUCLEOTIDE SEQUENCE [LARGE SCALE GENOMIC DNA]</scope>
    <source>
        <strain>ATCC 43049 / DSM 3752 / JCM 8966 / VKM B-1809</strain>
    </source>
</reference>